<name>RBFA_STAA3</name>
<gene>
    <name evidence="1" type="primary">rbfA</name>
    <name type="ordered locus">SAUSA300_1163</name>
</gene>
<accession>Q2FHG8</accession>
<feature type="chain" id="PRO_1000000220" description="Ribosome-binding factor A">
    <location>
        <begin position="1"/>
        <end position="116"/>
    </location>
</feature>
<evidence type="ECO:0000255" key="1">
    <source>
        <dbReference type="HAMAP-Rule" id="MF_00003"/>
    </source>
</evidence>
<dbReference type="EMBL" id="CP000255">
    <property type="protein sequence ID" value="ABD22191.1"/>
    <property type="molecule type" value="Genomic_DNA"/>
</dbReference>
<dbReference type="RefSeq" id="WP_000097322.1">
    <property type="nucleotide sequence ID" value="NZ_CP027476.1"/>
</dbReference>
<dbReference type="SMR" id="Q2FHG8"/>
<dbReference type="KEGG" id="saa:SAUSA300_1163"/>
<dbReference type="HOGENOM" id="CLU_089475_6_3_9"/>
<dbReference type="OMA" id="QHAKIFV"/>
<dbReference type="Proteomes" id="UP000001939">
    <property type="component" value="Chromosome"/>
</dbReference>
<dbReference type="GO" id="GO:0005829">
    <property type="term" value="C:cytosol"/>
    <property type="evidence" value="ECO:0007669"/>
    <property type="project" value="TreeGrafter"/>
</dbReference>
<dbReference type="GO" id="GO:0043024">
    <property type="term" value="F:ribosomal small subunit binding"/>
    <property type="evidence" value="ECO:0007669"/>
    <property type="project" value="TreeGrafter"/>
</dbReference>
<dbReference type="GO" id="GO:0030490">
    <property type="term" value="P:maturation of SSU-rRNA"/>
    <property type="evidence" value="ECO:0007669"/>
    <property type="project" value="UniProtKB-UniRule"/>
</dbReference>
<dbReference type="FunFam" id="3.30.300.20:FF:000009">
    <property type="entry name" value="Ribosome-binding factor A"/>
    <property type="match status" value="1"/>
</dbReference>
<dbReference type="Gene3D" id="3.30.300.20">
    <property type="match status" value="1"/>
</dbReference>
<dbReference type="HAMAP" id="MF_00003">
    <property type="entry name" value="RbfA"/>
    <property type="match status" value="1"/>
</dbReference>
<dbReference type="InterPro" id="IPR015946">
    <property type="entry name" value="KH_dom-like_a/b"/>
</dbReference>
<dbReference type="InterPro" id="IPR000238">
    <property type="entry name" value="RbfA"/>
</dbReference>
<dbReference type="InterPro" id="IPR023799">
    <property type="entry name" value="RbfA_dom_sf"/>
</dbReference>
<dbReference type="InterPro" id="IPR020053">
    <property type="entry name" value="Ribosome-bd_factorA_CS"/>
</dbReference>
<dbReference type="NCBIfam" id="TIGR00082">
    <property type="entry name" value="rbfA"/>
    <property type="match status" value="1"/>
</dbReference>
<dbReference type="PANTHER" id="PTHR33515">
    <property type="entry name" value="RIBOSOME-BINDING FACTOR A, CHLOROPLASTIC-RELATED"/>
    <property type="match status" value="1"/>
</dbReference>
<dbReference type="PANTHER" id="PTHR33515:SF1">
    <property type="entry name" value="RIBOSOME-BINDING FACTOR A, CHLOROPLASTIC-RELATED"/>
    <property type="match status" value="1"/>
</dbReference>
<dbReference type="Pfam" id="PF02033">
    <property type="entry name" value="RBFA"/>
    <property type="match status" value="1"/>
</dbReference>
<dbReference type="SUPFAM" id="SSF89919">
    <property type="entry name" value="Ribosome-binding factor A, RbfA"/>
    <property type="match status" value="1"/>
</dbReference>
<dbReference type="PROSITE" id="PS01319">
    <property type="entry name" value="RBFA"/>
    <property type="match status" value="1"/>
</dbReference>
<organism>
    <name type="scientific">Staphylococcus aureus (strain USA300)</name>
    <dbReference type="NCBI Taxonomy" id="367830"/>
    <lineage>
        <taxon>Bacteria</taxon>
        <taxon>Bacillati</taxon>
        <taxon>Bacillota</taxon>
        <taxon>Bacilli</taxon>
        <taxon>Bacillales</taxon>
        <taxon>Staphylococcaceae</taxon>
        <taxon>Staphylococcus</taxon>
    </lineage>
</organism>
<keyword id="KW-0963">Cytoplasm</keyword>
<keyword id="KW-0690">Ribosome biogenesis</keyword>
<comment type="function">
    <text evidence="1">One of several proteins that assist in the late maturation steps of the functional core of the 30S ribosomal subunit. Associates with free 30S ribosomal subunits (but not with 30S subunits that are part of 70S ribosomes or polysomes). Required for efficient processing of 16S rRNA. May interact with the 5'-terminal helix region of 16S rRNA.</text>
</comment>
<comment type="subunit">
    <text evidence="1">Monomer. Binds 30S ribosomal subunits, but not 50S ribosomal subunits or 70S ribosomes.</text>
</comment>
<comment type="subcellular location">
    <subcellularLocation>
        <location evidence="1">Cytoplasm</location>
    </subcellularLocation>
</comment>
<comment type="similarity">
    <text evidence="1">Belongs to the RbfA family.</text>
</comment>
<proteinExistence type="inferred from homology"/>
<sequence>MSSMRAERVGEQMKKELMDIINNKVKDPRVGFITITDVVLTNDLSQAKVFLTVLGNDKEVENTFKALDKAKGFIKSELGSRMRLRIMPELMYEYDQSIEYGNKIERMIQDLHKQDR</sequence>
<protein>
    <recommendedName>
        <fullName evidence="1">Ribosome-binding factor A</fullName>
    </recommendedName>
</protein>
<reference key="1">
    <citation type="journal article" date="2006" name="Lancet">
        <title>Complete genome sequence of USA300, an epidemic clone of community-acquired meticillin-resistant Staphylococcus aureus.</title>
        <authorList>
            <person name="Diep B.A."/>
            <person name="Gill S.R."/>
            <person name="Chang R.F."/>
            <person name="Phan T.H."/>
            <person name="Chen J.H."/>
            <person name="Davidson M.G."/>
            <person name="Lin F."/>
            <person name="Lin J."/>
            <person name="Carleton H.A."/>
            <person name="Mongodin E.F."/>
            <person name="Sensabaugh G.F."/>
            <person name="Perdreau-Remington F."/>
        </authorList>
    </citation>
    <scope>NUCLEOTIDE SEQUENCE [LARGE SCALE GENOMIC DNA]</scope>
    <source>
        <strain>USA300</strain>
    </source>
</reference>